<gene>
    <name evidence="1" type="primary">zwf1</name>
    <name type="synonym">zwf</name>
    <name type="ordered locus">MT1153</name>
</gene>
<comment type="function">
    <text evidence="1">Catalyzes the oxidation of glucose 6-phosphate to 6-phosphogluconolactone.</text>
</comment>
<comment type="catalytic activity">
    <reaction evidence="1">
        <text>D-glucose 6-phosphate + NADP(+) = 6-phospho-D-glucono-1,5-lactone + NADPH + H(+)</text>
        <dbReference type="Rhea" id="RHEA:15841"/>
        <dbReference type="ChEBI" id="CHEBI:15378"/>
        <dbReference type="ChEBI" id="CHEBI:57783"/>
        <dbReference type="ChEBI" id="CHEBI:57955"/>
        <dbReference type="ChEBI" id="CHEBI:58349"/>
        <dbReference type="ChEBI" id="CHEBI:61548"/>
        <dbReference type="EC" id="1.1.1.49"/>
    </reaction>
</comment>
<comment type="pathway">
    <text evidence="1">Carbohydrate degradation; pentose phosphate pathway; D-ribulose 5-phosphate from D-glucose 6-phosphate (oxidative stage): step 1/3.</text>
</comment>
<comment type="similarity">
    <text evidence="1">Belongs to the glucose-6-phosphate dehydrogenase family.</text>
</comment>
<evidence type="ECO:0000255" key="1">
    <source>
        <dbReference type="HAMAP-Rule" id="MF_00966"/>
    </source>
</evidence>
<sequence>MVDGGGGASDLLVIFGITGDLARKMTFRALYRLERHQLLDCPILGVASDDMSVGQLVKWARESIGRTEKIDDAVFDRLAGRLSYLHGDVTDSQLYDSLAELIGSACRPLYYLEMPPALFAPIVENLANVRLLERARVAVEKPFGHDLASALELNARLRAVLGEDQILRVDHFLGKQPVVELEYLRFANQALAELWDRNSISEIHITMAEDFGVEDRGKFYDAVGALRDVVQNHLLQVLALVTMEPPVGSSADDLNDKKAEVFRAMAPLDPDRCVRGQYLGYTEVAGVASDSATETYVALRTEIDNWRWAGVPIFVRSGKELPAKVTEVRLFLRRVPALAFLPNRRPAEPNQIVLRIDPDPGMRLQISAHTDDSWRDIHLDSSFAVDLGEPIRPYERLLYAGLVGDHQLFAREDSIEQTWRIVQPLLDNPGEIHRYDRGSWGPEAAQSLLRGHRGWQSPWLPRGTDA</sequence>
<dbReference type="EC" id="1.1.1.49" evidence="1"/>
<dbReference type="EMBL" id="AE000516">
    <property type="protein sequence ID" value="AAK45410.1"/>
    <property type="molecule type" value="Genomic_DNA"/>
</dbReference>
<dbReference type="PIR" id="B70538">
    <property type="entry name" value="B70538"/>
</dbReference>
<dbReference type="RefSeq" id="WP_003917423.1">
    <property type="nucleotide sequence ID" value="NZ_KK341227.1"/>
</dbReference>
<dbReference type="SMR" id="P9WN70"/>
<dbReference type="KEGG" id="mtc:MT1153"/>
<dbReference type="PATRIC" id="fig|83331.31.peg.1246"/>
<dbReference type="HOGENOM" id="CLU_013524_5_0_11"/>
<dbReference type="UniPathway" id="UPA00115">
    <property type="reaction ID" value="UER00408"/>
</dbReference>
<dbReference type="Proteomes" id="UP000001020">
    <property type="component" value="Chromosome"/>
</dbReference>
<dbReference type="GO" id="GO:0005829">
    <property type="term" value="C:cytosol"/>
    <property type="evidence" value="ECO:0007669"/>
    <property type="project" value="TreeGrafter"/>
</dbReference>
<dbReference type="GO" id="GO:0004345">
    <property type="term" value="F:glucose-6-phosphate dehydrogenase activity"/>
    <property type="evidence" value="ECO:0007669"/>
    <property type="project" value="UniProtKB-UniRule"/>
</dbReference>
<dbReference type="GO" id="GO:0050661">
    <property type="term" value="F:NADP binding"/>
    <property type="evidence" value="ECO:0007669"/>
    <property type="project" value="UniProtKB-UniRule"/>
</dbReference>
<dbReference type="GO" id="GO:0006006">
    <property type="term" value="P:glucose metabolic process"/>
    <property type="evidence" value="ECO:0007669"/>
    <property type="project" value="UniProtKB-KW"/>
</dbReference>
<dbReference type="GO" id="GO:0009051">
    <property type="term" value="P:pentose-phosphate shunt, oxidative branch"/>
    <property type="evidence" value="ECO:0007669"/>
    <property type="project" value="TreeGrafter"/>
</dbReference>
<dbReference type="Gene3D" id="3.30.360.10">
    <property type="entry name" value="Dihydrodipicolinate Reductase, domain 2"/>
    <property type="match status" value="1"/>
</dbReference>
<dbReference type="Gene3D" id="3.40.50.720">
    <property type="entry name" value="NAD(P)-binding Rossmann-like Domain"/>
    <property type="match status" value="1"/>
</dbReference>
<dbReference type="HAMAP" id="MF_00966">
    <property type="entry name" value="G6PD"/>
    <property type="match status" value="1"/>
</dbReference>
<dbReference type="InterPro" id="IPR001282">
    <property type="entry name" value="G6P_DH"/>
</dbReference>
<dbReference type="InterPro" id="IPR019796">
    <property type="entry name" value="G6P_DH_AS"/>
</dbReference>
<dbReference type="InterPro" id="IPR022675">
    <property type="entry name" value="G6P_DH_C"/>
</dbReference>
<dbReference type="InterPro" id="IPR022674">
    <property type="entry name" value="G6P_DH_NAD-bd"/>
</dbReference>
<dbReference type="InterPro" id="IPR036291">
    <property type="entry name" value="NAD(P)-bd_dom_sf"/>
</dbReference>
<dbReference type="NCBIfam" id="NF009492">
    <property type="entry name" value="PRK12853.1-3"/>
    <property type="match status" value="1"/>
</dbReference>
<dbReference type="NCBIfam" id="TIGR00871">
    <property type="entry name" value="zwf"/>
    <property type="match status" value="1"/>
</dbReference>
<dbReference type="PANTHER" id="PTHR23429:SF0">
    <property type="entry name" value="GLUCOSE-6-PHOSPHATE 1-DEHYDROGENASE"/>
    <property type="match status" value="1"/>
</dbReference>
<dbReference type="PANTHER" id="PTHR23429">
    <property type="entry name" value="GLUCOSE-6-PHOSPHATE 1-DEHYDROGENASE G6PD"/>
    <property type="match status" value="1"/>
</dbReference>
<dbReference type="Pfam" id="PF02781">
    <property type="entry name" value="G6PD_C"/>
    <property type="match status" value="1"/>
</dbReference>
<dbReference type="Pfam" id="PF00479">
    <property type="entry name" value="G6PD_N"/>
    <property type="match status" value="1"/>
</dbReference>
<dbReference type="PIRSF" id="PIRSF000110">
    <property type="entry name" value="G6PD"/>
    <property type="match status" value="1"/>
</dbReference>
<dbReference type="PRINTS" id="PR00079">
    <property type="entry name" value="G6PDHDRGNASE"/>
</dbReference>
<dbReference type="SUPFAM" id="SSF55347">
    <property type="entry name" value="Glyceraldehyde-3-phosphate dehydrogenase-like, C-terminal domain"/>
    <property type="match status" value="1"/>
</dbReference>
<dbReference type="SUPFAM" id="SSF51735">
    <property type="entry name" value="NAD(P)-binding Rossmann-fold domains"/>
    <property type="match status" value="1"/>
</dbReference>
<dbReference type="PROSITE" id="PS00069">
    <property type="entry name" value="G6P_DEHYDROGENASE"/>
    <property type="match status" value="1"/>
</dbReference>
<protein>
    <recommendedName>
        <fullName evidence="1">Glucose-6-phosphate 1-dehydrogenase 1</fullName>
        <shortName evidence="1">G6PD 1</shortName>
        <ecNumber evidence="1">1.1.1.49</ecNumber>
    </recommendedName>
</protein>
<organism>
    <name type="scientific">Mycobacterium tuberculosis (strain CDC 1551 / Oshkosh)</name>
    <dbReference type="NCBI Taxonomy" id="83331"/>
    <lineage>
        <taxon>Bacteria</taxon>
        <taxon>Bacillati</taxon>
        <taxon>Actinomycetota</taxon>
        <taxon>Actinomycetes</taxon>
        <taxon>Mycobacteriales</taxon>
        <taxon>Mycobacteriaceae</taxon>
        <taxon>Mycobacterium</taxon>
        <taxon>Mycobacterium tuberculosis complex</taxon>
    </lineage>
</organism>
<accession>P9WN70</accession>
<accession>L0T5T3</accession>
<accession>O06573</accession>
<accession>P0A586</accession>
<feature type="chain" id="PRO_0000427178" description="Glucose-6-phosphate 1-dehydrogenase 1">
    <location>
        <begin position="1"/>
        <end position="466"/>
    </location>
</feature>
<feature type="active site" description="Proton acceptor" evidence="1">
    <location>
        <position position="233"/>
    </location>
</feature>
<feature type="binding site" evidence="1">
    <location>
        <position position="48"/>
    </location>
    <ligand>
        <name>NADP(+)</name>
        <dbReference type="ChEBI" id="CHEBI:58349"/>
    </ligand>
</feature>
<feature type="binding site" evidence="1">
    <location>
        <begin position="88"/>
        <end position="89"/>
    </location>
    <ligand>
        <name>NADP(+)</name>
        <dbReference type="ChEBI" id="CHEBI:58349"/>
    </ligand>
</feature>
<feature type="binding site" evidence="1">
    <location>
        <position position="141"/>
    </location>
    <ligand>
        <name>NADP(+)</name>
        <dbReference type="ChEBI" id="CHEBI:58349"/>
    </ligand>
</feature>
<feature type="binding site" evidence="1">
    <location>
        <position position="171"/>
    </location>
    <ligand>
        <name>substrate</name>
    </ligand>
</feature>
<feature type="binding site" evidence="1">
    <location>
        <position position="175"/>
    </location>
    <ligand>
        <name>substrate</name>
    </ligand>
</feature>
<feature type="binding site" evidence="1">
    <location>
        <position position="209"/>
    </location>
    <ligand>
        <name>substrate</name>
    </ligand>
</feature>
<feature type="binding site" evidence="1">
    <location>
        <position position="228"/>
    </location>
    <ligand>
        <name>substrate</name>
    </ligand>
</feature>
<feature type="binding site" evidence="1">
    <location>
        <position position="319"/>
    </location>
    <ligand>
        <name>substrate</name>
    </ligand>
</feature>
<feature type="binding site" evidence="1">
    <location>
        <position position="324"/>
    </location>
    <ligand>
        <name>substrate</name>
    </ligand>
</feature>
<proteinExistence type="inferred from homology"/>
<keyword id="KW-0119">Carbohydrate metabolism</keyword>
<keyword id="KW-0313">Glucose metabolism</keyword>
<keyword id="KW-0521">NADP</keyword>
<keyword id="KW-0560">Oxidoreductase</keyword>
<keyword id="KW-1185">Reference proteome</keyword>
<reference key="1">
    <citation type="journal article" date="2002" name="J. Bacteriol.">
        <title>Whole-genome comparison of Mycobacterium tuberculosis clinical and laboratory strains.</title>
        <authorList>
            <person name="Fleischmann R.D."/>
            <person name="Alland D."/>
            <person name="Eisen J.A."/>
            <person name="Carpenter L."/>
            <person name="White O."/>
            <person name="Peterson J.D."/>
            <person name="DeBoy R.T."/>
            <person name="Dodson R.J."/>
            <person name="Gwinn M.L."/>
            <person name="Haft D.H."/>
            <person name="Hickey E.K."/>
            <person name="Kolonay J.F."/>
            <person name="Nelson W.C."/>
            <person name="Umayam L.A."/>
            <person name="Ermolaeva M.D."/>
            <person name="Salzberg S.L."/>
            <person name="Delcher A."/>
            <person name="Utterback T.R."/>
            <person name="Weidman J.F."/>
            <person name="Khouri H.M."/>
            <person name="Gill J."/>
            <person name="Mikula A."/>
            <person name="Bishai W."/>
            <person name="Jacobs W.R. Jr."/>
            <person name="Venter J.C."/>
            <person name="Fraser C.M."/>
        </authorList>
    </citation>
    <scope>NUCLEOTIDE SEQUENCE [LARGE SCALE GENOMIC DNA]</scope>
    <source>
        <strain>CDC 1551 / Oshkosh</strain>
    </source>
</reference>
<name>G6PD1_MYCTO</name>